<name>HDA_ECOHS</name>
<comment type="function">
    <text evidence="1">Mediates the interaction of DNA replication initiator protein DnaA with DNA polymerase subunit beta sliding clamp (dnaN). Stimulates hydrolysis of ATP-DnaA to ADP-DnaA, rendering DnaA inactive for reinitiation, a process called regulatory inhibition of DnaA or RIDA (By similarity).</text>
</comment>
<comment type="subunit">
    <text evidence="2">The active form seems to be an ADP-bound monomer. Forms the RIDA complex (regulatory inactivation of DnaA) of ATP-DnaA, ADP-Hda and the DNA-loaded beta sliding clamp (dnaN).</text>
</comment>
<comment type="similarity">
    <text evidence="2">Belongs to the DnaA family. HdA subfamily.</text>
</comment>
<comment type="sequence caution" evidence="3">
    <conflict type="erroneous initiation">
        <sequence resource="EMBL-CDS" id="ABV06892"/>
    </conflict>
</comment>
<feature type="chain" id="PRO_1000065560" description="DnaA regulatory inactivator Hda">
    <location>
        <begin position="1"/>
        <end position="233"/>
    </location>
</feature>
<evidence type="ECO:0000250" key="1"/>
<evidence type="ECO:0000255" key="2">
    <source>
        <dbReference type="HAMAP-Rule" id="MF_01158"/>
    </source>
</evidence>
<evidence type="ECO:0000305" key="3"/>
<protein>
    <recommendedName>
        <fullName evidence="2">DnaA regulatory inactivator Hda</fullName>
    </recommendedName>
</protein>
<reference key="1">
    <citation type="journal article" date="2008" name="J. Bacteriol.">
        <title>The pangenome structure of Escherichia coli: comparative genomic analysis of E. coli commensal and pathogenic isolates.</title>
        <authorList>
            <person name="Rasko D.A."/>
            <person name="Rosovitz M.J."/>
            <person name="Myers G.S.A."/>
            <person name="Mongodin E.F."/>
            <person name="Fricke W.F."/>
            <person name="Gajer P."/>
            <person name="Crabtree J."/>
            <person name="Sebaihia M."/>
            <person name="Thomson N.R."/>
            <person name="Chaudhuri R."/>
            <person name="Henderson I.R."/>
            <person name="Sperandio V."/>
            <person name="Ravel J."/>
        </authorList>
    </citation>
    <scope>NUCLEOTIDE SEQUENCE [LARGE SCALE GENOMIC DNA]</scope>
    <source>
        <strain>HS</strain>
    </source>
</reference>
<sequence length="233" mass="26633">MNTPAQLSLPLYLPDDETFASFWPGDNSSLLAALQNVLRQEHSGYIYLWAREGAGRSHLLHAACAELSQRGDAVGYVPLDKRTWFVPEVLDGMEHLSLVCIDNIECIAGDELWEMAIFDLYNRILESGKTRLLITGDRPPRQLNLGLPDLASRLDWGQIYKLQPLSDEDKLQALQLRARLRGFELPEDVGRFLLKRLDREMRTLFMTLDQLDRASITAQRKLTIPFVKEILKL</sequence>
<accession>A8A2Y8</accession>
<dbReference type="EMBL" id="CP000802">
    <property type="protein sequence ID" value="ABV06892.1"/>
    <property type="status" value="ALT_INIT"/>
    <property type="molecule type" value="Genomic_DNA"/>
</dbReference>
<dbReference type="RefSeq" id="WP_001307333.1">
    <property type="nucleotide sequence ID" value="NC_009800.1"/>
</dbReference>
<dbReference type="SMR" id="A8A2Y8"/>
<dbReference type="KEGG" id="ecx:EcHS_A2631"/>
<dbReference type="HOGENOM" id="CLU_072265_1_1_6"/>
<dbReference type="GO" id="GO:0006270">
    <property type="term" value="P:DNA replication initiation"/>
    <property type="evidence" value="ECO:0007669"/>
    <property type="project" value="TreeGrafter"/>
</dbReference>
<dbReference type="GO" id="GO:0032297">
    <property type="term" value="P:negative regulation of DNA-templated DNA replication initiation"/>
    <property type="evidence" value="ECO:0007669"/>
    <property type="project" value="InterPro"/>
</dbReference>
<dbReference type="FunFam" id="1.10.8.60:FF:000024">
    <property type="entry name" value="DnaA regulatory inactivator Hda"/>
    <property type="match status" value="1"/>
</dbReference>
<dbReference type="FunFam" id="3.40.50.300:FF:000452">
    <property type="entry name" value="DnaA regulatory inactivator Hda"/>
    <property type="match status" value="1"/>
</dbReference>
<dbReference type="Gene3D" id="1.10.8.60">
    <property type="match status" value="1"/>
</dbReference>
<dbReference type="Gene3D" id="3.40.50.300">
    <property type="entry name" value="P-loop containing nucleotide triphosphate hydrolases"/>
    <property type="match status" value="1"/>
</dbReference>
<dbReference type="HAMAP" id="MF_01158">
    <property type="entry name" value="Hda"/>
    <property type="match status" value="1"/>
</dbReference>
<dbReference type="InterPro" id="IPR020591">
    <property type="entry name" value="Chromosome_initiator_DnaA-like"/>
</dbReference>
<dbReference type="InterPro" id="IPR013317">
    <property type="entry name" value="DnaA_dom"/>
</dbReference>
<dbReference type="InterPro" id="IPR017788">
    <property type="entry name" value="Hda"/>
</dbReference>
<dbReference type="InterPro" id="IPR022864">
    <property type="entry name" value="Hda_Enterobact"/>
</dbReference>
<dbReference type="InterPro" id="IPR055199">
    <property type="entry name" value="Hda_lid"/>
</dbReference>
<dbReference type="InterPro" id="IPR027417">
    <property type="entry name" value="P-loop_NTPase"/>
</dbReference>
<dbReference type="NCBIfam" id="TIGR03420">
    <property type="entry name" value="DnaA_homol_Hda"/>
    <property type="match status" value="1"/>
</dbReference>
<dbReference type="NCBIfam" id="NF005982">
    <property type="entry name" value="PRK08084.1"/>
    <property type="match status" value="1"/>
</dbReference>
<dbReference type="PANTHER" id="PTHR30050">
    <property type="entry name" value="CHROMOSOMAL REPLICATION INITIATOR PROTEIN DNAA"/>
    <property type="match status" value="1"/>
</dbReference>
<dbReference type="PANTHER" id="PTHR30050:SF5">
    <property type="entry name" value="DNAA REGULATORY INACTIVATOR HDA"/>
    <property type="match status" value="1"/>
</dbReference>
<dbReference type="Pfam" id="PF00308">
    <property type="entry name" value="Bac_DnaA"/>
    <property type="match status" value="1"/>
</dbReference>
<dbReference type="Pfam" id="PF22688">
    <property type="entry name" value="Hda_lid"/>
    <property type="match status" value="1"/>
</dbReference>
<dbReference type="PRINTS" id="PR00051">
    <property type="entry name" value="DNAA"/>
</dbReference>
<dbReference type="SUPFAM" id="SSF52540">
    <property type="entry name" value="P-loop containing nucleoside triphosphate hydrolases"/>
    <property type="match status" value="1"/>
</dbReference>
<keyword id="KW-0235">DNA replication</keyword>
<keyword id="KW-0236">DNA replication inhibitor</keyword>
<organism>
    <name type="scientific">Escherichia coli O9:H4 (strain HS)</name>
    <dbReference type="NCBI Taxonomy" id="331112"/>
    <lineage>
        <taxon>Bacteria</taxon>
        <taxon>Pseudomonadati</taxon>
        <taxon>Pseudomonadota</taxon>
        <taxon>Gammaproteobacteria</taxon>
        <taxon>Enterobacterales</taxon>
        <taxon>Enterobacteriaceae</taxon>
        <taxon>Escherichia</taxon>
    </lineage>
</organism>
<proteinExistence type="inferred from homology"/>
<gene>
    <name evidence="2" type="primary">hda</name>
    <name type="ordered locus">EcHS_A2631</name>
</gene>